<reference key="1">
    <citation type="journal article" date="1996" name="Science">
        <title>Complete genome sequence of the methanogenic archaeon, Methanococcus jannaschii.</title>
        <authorList>
            <person name="Bult C.J."/>
            <person name="White O."/>
            <person name="Olsen G.J."/>
            <person name="Zhou L."/>
            <person name="Fleischmann R.D."/>
            <person name="Sutton G.G."/>
            <person name="Blake J.A."/>
            <person name="FitzGerald L.M."/>
            <person name="Clayton R.A."/>
            <person name="Gocayne J.D."/>
            <person name="Kerlavage A.R."/>
            <person name="Dougherty B.A."/>
            <person name="Tomb J.-F."/>
            <person name="Adams M.D."/>
            <person name="Reich C.I."/>
            <person name="Overbeek R."/>
            <person name="Kirkness E.F."/>
            <person name="Weinstock K.G."/>
            <person name="Merrick J.M."/>
            <person name="Glodek A."/>
            <person name="Scott J.L."/>
            <person name="Geoghagen N.S.M."/>
            <person name="Weidman J.F."/>
            <person name="Fuhrmann J.L."/>
            <person name="Nguyen D."/>
            <person name="Utterback T.R."/>
            <person name="Kelley J.M."/>
            <person name="Peterson J.D."/>
            <person name="Sadow P.W."/>
            <person name="Hanna M.C."/>
            <person name="Cotton M.D."/>
            <person name="Roberts K.M."/>
            <person name="Hurst M.A."/>
            <person name="Kaine B.P."/>
            <person name="Borodovsky M."/>
            <person name="Klenk H.-P."/>
            <person name="Fraser C.M."/>
            <person name="Smith H.O."/>
            <person name="Woese C.R."/>
            <person name="Venter J.C."/>
        </authorList>
    </citation>
    <scope>NUCLEOTIDE SEQUENCE [LARGE SCALE GENOMIC DNA]</scope>
    <source>
        <strain>ATCC 43067 / DSM 2661 / JAL-1 / JCM 10045 / NBRC 100440</strain>
    </source>
</reference>
<proteinExistence type="predicted"/>
<feature type="chain" id="PRO_0000107024" description="Uncharacterized protein MJ0769">
    <location>
        <begin position="1"/>
        <end position="169"/>
    </location>
</feature>
<organism>
    <name type="scientific">Methanocaldococcus jannaschii (strain ATCC 43067 / DSM 2661 / JAL-1 / JCM 10045 / NBRC 100440)</name>
    <name type="common">Methanococcus jannaschii</name>
    <dbReference type="NCBI Taxonomy" id="243232"/>
    <lineage>
        <taxon>Archaea</taxon>
        <taxon>Methanobacteriati</taxon>
        <taxon>Methanobacteriota</taxon>
        <taxon>Methanomada group</taxon>
        <taxon>Methanococci</taxon>
        <taxon>Methanococcales</taxon>
        <taxon>Methanocaldococcaceae</taxon>
        <taxon>Methanocaldococcus</taxon>
    </lineage>
</organism>
<dbReference type="EMBL" id="L77117">
    <property type="protein sequence ID" value="AAB98774.1"/>
    <property type="molecule type" value="Genomic_DNA"/>
</dbReference>
<dbReference type="PIR" id="A64396">
    <property type="entry name" value="A64396"/>
</dbReference>
<dbReference type="RefSeq" id="WP_010870274.1">
    <property type="nucleotide sequence ID" value="NC_000909.1"/>
</dbReference>
<dbReference type="STRING" id="243232.MJ_0769"/>
<dbReference type="PaxDb" id="243232-MJ_0769"/>
<dbReference type="EnsemblBacteria" id="AAB98774">
    <property type="protein sequence ID" value="AAB98774"/>
    <property type="gene ID" value="MJ_0769"/>
</dbReference>
<dbReference type="GeneID" id="1451646"/>
<dbReference type="KEGG" id="mja:MJ_0769"/>
<dbReference type="eggNOG" id="arCOG03352">
    <property type="taxonomic scope" value="Archaea"/>
</dbReference>
<dbReference type="HOGENOM" id="CLU_101656_0_0_2"/>
<dbReference type="InParanoid" id="Q58179"/>
<dbReference type="OrthoDB" id="62730at2157"/>
<dbReference type="PhylomeDB" id="Q58179"/>
<dbReference type="Proteomes" id="UP000000805">
    <property type="component" value="Chromosome"/>
</dbReference>
<dbReference type="GO" id="GO:0003677">
    <property type="term" value="F:DNA binding"/>
    <property type="evidence" value="ECO:0007669"/>
    <property type="project" value="InterPro"/>
</dbReference>
<dbReference type="GO" id="GO:0000150">
    <property type="term" value="F:DNA strand exchange activity"/>
    <property type="evidence" value="ECO:0007669"/>
    <property type="project" value="InterPro"/>
</dbReference>
<dbReference type="Gene3D" id="1.10.10.60">
    <property type="entry name" value="Homeodomain-like"/>
    <property type="match status" value="1"/>
</dbReference>
<dbReference type="InterPro" id="IPR009057">
    <property type="entry name" value="Homeodomain-like_sf"/>
</dbReference>
<dbReference type="InterPro" id="IPR006120">
    <property type="entry name" value="Resolvase_HTH_dom"/>
</dbReference>
<dbReference type="Pfam" id="PF02796">
    <property type="entry name" value="HTH_7"/>
    <property type="match status" value="1"/>
</dbReference>
<dbReference type="SUPFAM" id="SSF46689">
    <property type="entry name" value="Homeodomain-like"/>
    <property type="match status" value="1"/>
</dbReference>
<accession>Q58179</accession>
<sequence length="169" mass="20167">MIEIKISKIPRWDEINKIVKLREKDLVLLKLPKSVYEHPKMAYKLEYLKKKGIFIEVENAKRGRKRKVDDETVKKIHELIIEGYSVREIGNILGIGKSTVWDYAKDCIKELKLERFKKLVWEYREYLINKGKYSPSLQVLFLELEATVDYDLEKAKKILEDIIKHVKEF</sequence>
<keyword id="KW-1185">Reference proteome</keyword>
<protein>
    <recommendedName>
        <fullName>Uncharacterized protein MJ0769</fullName>
    </recommendedName>
</protein>
<name>Y769_METJA</name>
<gene>
    <name type="ordered locus">MJ0769</name>
</gene>